<proteinExistence type="inferred from homology"/>
<name>SYP1_STRAW</name>
<accession>Q82K46</accession>
<organism>
    <name type="scientific">Streptomyces avermitilis (strain ATCC 31267 / DSM 46492 / JCM 5070 / NBRC 14893 / NCIMB 12804 / NRRL 8165 / MA-4680)</name>
    <dbReference type="NCBI Taxonomy" id="227882"/>
    <lineage>
        <taxon>Bacteria</taxon>
        <taxon>Bacillati</taxon>
        <taxon>Actinomycetota</taxon>
        <taxon>Actinomycetes</taxon>
        <taxon>Kitasatosporales</taxon>
        <taxon>Streptomycetaceae</taxon>
        <taxon>Streptomyces</taxon>
    </lineage>
</organism>
<feature type="chain" id="PRO_0000248790" description="Proline--tRNA ligase 1">
    <location>
        <begin position="1"/>
        <end position="564"/>
    </location>
</feature>
<evidence type="ECO:0000255" key="1">
    <source>
        <dbReference type="HAMAP-Rule" id="MF_01569"/>
    </source>
</evidence>
<sequence>MAQVQRMSRLMVKTLRDDPADAETLNHKLLVRADYVRRTAAGIWSWLPLGKKVLENVARVVREEMDAMGGQEVLLPALLPKEPYEATGRWEEYGPELFRLKDRKGAEYLLGPTHEEIFTQLVKDQCSSYKDLPVILYQIQAKYRDEARPRAGILRGREFLMKDSYSFDTADEGLAQSYALHREAYIKIFNRLGLDHRIVSAVSGAMGGSASEEFLAPAPAGEDTFVDCPACDYAANTEAVTFVAPAVESVEHPAVEELDTPDTPTIESLAEYLGVPASATLKNLLVKADGEIVAVGVPGDREVDLGKLGEHLAPAVVELVTAEDFEGRDDLVRGYVGPQGLEKVRYIADPRVAPGTAWITGANKINTHAKNVVAGRDFEVDDYLDVVVVEEGDPCPSCGTGLRLDRAIEIGHIFQLGRKYADAFQLDVLGKEGKPVRVTMGSYGIGVSRAVAALAEQTADEQGLCWPKEIAPADVHVVAAGKALQTELALDVAEKLGAAGVRVLVDDRAGVSPGVKFTDAELIGVPQILVAGRRSAEGVLELKDRKTGEREELTVEEAIARLSA</sequence>
<gene>
    <name evidence="1" type="primary">proS1</name>
    <name type="ordered locus">SAV_2558</name>
</gene>
<protein>
    <recommendedName>
        <fullName evidence="1">Proline--tRNA ligase 1</fullName>
        <ecNumber evidence="1">6.1.1.15</ecNumber>
    </recommendedName>
    <alternativeName>
        <fullName evidence="1">Prolyl-tRNA synthetase 1</fullName>
        <shortName evidence="1">ProRS 1</shortName>
    </alternativeName>
</protein>
<reference key="1">
    <citation type="journal article" date="2001" name="Proc. Natl. Acad. Sci. U.S.A.">
        <title>Genome sequence of an industrial microorganism Streptomyces avermitilis: deducing the ability of producing secondary metabolites.</title>
        <authorList>
            <person name="Omura S."/>
            <person name="Ikeda H."/>
            <person name="Ishikawa J."/>
            <person name="Hanamoto A."/>
            <person name="Takahashi C."/>
            <person name="Shinose M."/>
            <person name="Takahashi Y."/>
            <person name="Horikawa H."/>
            <person name="Nakazawa H."/>
            <person name="Osonoe T."/>
            <person name="Kikuchi H."/>
            <person name="Shiba T."/>
            <person name="Sakaki Y."/>
            <person name="Hattori M."/>
        </authorList>
    </citation>
    <scope>NUCLEOTIDE SEQUENCE [LARGE SCALE GENOMIC DNA]</scope>
    <source>
        <strain>ATCC 31267 / DSM 46492 / JCM 5070 / NBRC 14893 / NCIMB 12804 / NRRL 8165 / MA-4680</strain>
    </source>
</reference>
<reference key="2">
    <citation type="journal article" date="2003" name="Nat. Biotechnol.">
        <title>Complete genome sequence and comparative analysis of the industrial microorganism Streptomyces avermitilis.</title>
        <authorList>
            <person name="Ikeda H."/>
            <person name="Ishikawa J."/>
            <person name="Hanamoto A."/>
            <person name="Shinose M."/>
            <person name="Kikuchi H."/>
            <person name="Shiba T."/>
            <person name="Sakaki Y."/>
            <person name="Hattori M."/>
            <person name="Omura S."/>
        </authorList>
    </citation>
    <scope>NUCLEOTIDE SEQUENCE [LARGE SCALE GENOMIC DNA]</scope>
    <source>
        <strain>ATCC 31267 / DSM 46492 / JCM 5070 / NBRC 14893 / NCIMB 12804 / NRRL 8165 / MA-4680</strain>
    </source>
</reference>
<dbReference type="EC" id="6.1.1.15" evidence="1"/>
<dbReference type="EMBL" id="BA000030">
    <property type="protein sequence ID" value="BAC70269.1"/>
    <property type="molecule type" value="Genomic_DNA"/>
</dbReference>
<dbReference type="RefSeq" id="WP_010983994.1">
    <property type="nucleotide sequence ID" value="NC_003155.5"/>
</dbReference>
<dbReference type="SMR" id="Q82K46"/>
<dbReference type="GeneID" id="41539645"/>
<dbReference type="KEGG" id="sma:SAVERM_2558"/>
<dbReference type="eggNOG" id="COG0442">
    <property type="taxonomic scope" value="Bacteria"/>
</dbReference>
<dbReference type="HOGENOM" id="CLU_016739_0_0_11"/>
<dbReference type="Proteomes" id="UP000000428">
    <property type="component" value="Chromosome"/>
</dbReference>
<dbReference type="GO" id="GO:0005829">
    <property type="term" value="C:cytosol"/>
    <property type="evidence" value="ECO:0007669"/>
    <property type="project" value="TreeGrafter"/>
</dbReference>
<dbReference type="GO" id="GO:0002161">
    <property type="term" value="F:aminoacyl-tRNA deacylase activity"/>
    <property type="evidence" value="ECO:0007669"/>
    <property type="project" value="InterPro"/>
</dbReference>
<dbReference type="GO" id="GO:0005524">
    <property type="term" value="F:ATP binding"/>
    <property type="evidence" value="ECO:0007669"/>
    <property type="project" value="UniProtKB-UniRule"/>
</dbReference>
<dbReference type="GO" id="GO:0004827">
    <property type="term" value="F:proline-tRNA ligase activity"/>
    <property type="evidence" value="ECO:0007669"/>
    <property type="project" value="UniProtKB-UniRule"/>
</dbReference>
<dbReference type="GO" id="GO:0006433">
    <property type="term" value="P:prolyl-tRNA aminoacylation"/>
    <property type="evidence" value="ECO:0007669"/>
    <property type="project" value="UniProtKB-UniRule"/>
</dbReference>
<dbReference type="CDD" id="cd04334">
    <property type="entry name" value="ProRS-INS"/>
    <property type="match status" value="1"/>
</dbReference>
<dbReference type="CDD" id="cd00861">
    <property type="entry name" value="ProRS_anticodon_short"/>
    <property type="match status" value="1"/>
</dbReference>
<dbReference type="CDD" id="cd00779">
    <property type="entry name" value="ProRS_core_prok"/>
    <property type="match status" value="1"/>
</dbReference>
<dbReference type="FunFam" id="3.30.930.10:FF:000065">
    <property type="entry name" value="Proline--tRNA ligase"/>
    <property type="match status" value="1"/>
</dbReference>
<dbReference type="FunFam" id="3.30.930.10:FF:000066">
    <property type="entry name" value="Proline--tRNA ligase"/>
    <property type="match status" value="1"/>
</dbReference>
<dbReference type="Gene3D" id="3.40.50.800">
    <property type="entry name" value="Anticodon-binding domain"/>
    <property type="match status" value="1"/>
</dbReference>
<dbReference type="Gene3D" id="3.30.930.10">
    <property type="entry name" value="Bira Bifunctional Protein, Domain 2"/>
    <property type="match status" value="2"/>
</dbReference>
<dbReference type="HAMAP" id="MF_01569">
    <property type="entry name" value="Pro_tRNA_synth_type1"/>
    <property type="match status" value="1"/>
</dbReference>
<dbReference type="InterPro" id="IPR002314">
    <property type="entry name" value="aa-tRNA-synt_IIb"/>
</dbReference>
<dbReference type="InterPro" id="IPR006195">
    <property type="entry name" value="aa-tRNA-synth_II"/>
</dbReference>
<dbReference type="InterPro" id="IPR045864">
    <property type="entry name" value="aa-tRNA-synth_II/BPL/LPL"/>
</dbReference>
<dbReference type="InterPro" id="IPR004154">
    <property type="entry name" value="Anticodon-bd"/>
</dbReference>
<dbReference type="InterPro" id="IPR036621">
    <property type="entry name" value="Anticodon-bd_dom_sf"/>
</dbReference>
<dbReference type="InterPro" id="IPR002316">
    <property type="entry name" value="Pro-tRNA-ligase_IIa"/>
</dbReference>
<dbReference type="InterPro" id="IPR004500">
    <property type="entry name" value="Pro-tRNA-synth_IIa_bac-type"/>
</dbReference>
<dbReference type="InterPro" id="IPR023717">
    <property type="entry name" value="Pro-tRNA-Synthase_IIa_type1"/>
</dbReference>
<dbReference type="InterPro" id="IPR050062">
    <property type="entry name" value="Pro-tRNA_synthetase"/>
</dbReference>
<dbReference type="InterPro" id="IPR044140">
    <property type="entry name" value="ProRS_anticodon_short"/>
</dbReference>
<dbReference type="InterPro" id="IPR033730">
    <property type="entry name" value="ProRS_core_prok"/>
</dbReference>
<dbReference type="InterPro" id="IPR036754">
    <property type="entry name" value="YbaK/aa-tRNA-synt-asso_dom_sf"/>
</dbReference>
<dbReference type="InterPro" id="IPR007214">
    <property type="entry name" value="YbaK/aa-tRNA-synth-assoc-dom"/>
</dbReference>
<dbReference type="NCBIfam" id="NF006625">
    <property type="entry name" value="PRK09194.1"/>
    <property type="match status" value="1"/>
</dbReference>
<dbReference type="NCBIfam" id="TIGR00409">
    <property type="entry name" value="proS_fam_II"/>
    <property type="match status" value="1"/>
</dbReference>
<dbReference type="PANTHER" id="PTHR42753">
    <property type="entry name" value="MITOCHONDRIAL RIBOSOME PROTEIN L39/PROLYL-TRNA LIGASE FAMILY MEMBER"/>
    <property type="match status" value="1"/>
</dbReference>
<dbReference type="PANTHER" id="PTHR42753:SF2">
    <property type="entry name" value="PROLINE--TRNA LIGASE"/>
    <property type="match status" value="1"/>
</dbReference>
<dbReference type="Pfam" id="PF03129">
    <property type="entry name" value="HGTP_anticodon"/>
    <property type="match status" value="1"/>
</dbReference>
<dbReference type="Pfam" id="PF00587">
    <property type="entry name" value="tRNA-synt_2b"/>
    <property type="match status" value="1"/>
</dbReference>
<dbReference type="Pfam" id="PF04073">
    <property type="entry name" value="tRNA_edit"/>
    <property type="match status" value="1"/>
</dbReference>
<dbReference type="PRINTS" id="PR01046">
    <property type="entry name" value="TRNASYNTHPRO"/>
</dbReference>
<dbReference type="SUPFAM" id="SSF52954">
    <property type="entry name" value="Class II aaRS ABD-related"/>
    <property type="match status" value="1"/>
</dbReference>
<dbReference type="SUPFAM" id="SSF55681">
    <property type="entry name" value="Class II aaRS and biotin synthetases"/>
    <property type="match status" value="1"/>
</dbReference>
<dbReference type="SUPFAM" id="SSF55826">
    <property type="entry name" value="YbaK/ProRS associated domain"/>
    <property type="match status" value="1"/>
</dbReference>
<dbReference type="PROSITE" id="PS50862">
    <property type="entry name" value="AA_TRNA_LIGASE_II"/>
    <property type="match status" value="1"/>
</dbReference>
<comment type="function">
    <text evidence="1">Catalyzes the attachment of proline to tRNA(Pro) in a two-step reaction: proline is first activated by ATP to form Pro-AMP and then transferred to the acceptor end of tRNA(Pro). As ProRS can inadvertently accommodate and process non-cognate amino acids such as alanine and cysteine, to avoid such errors it has two additional distinct editing activities against alanine. One activity is designated as 'pretransfer' editing and involves the tRNA(Pro)-independent hydrolysis of activated Ala-AMP. The other activity is designated 'posttransfer' editing and involves deacylation of mischarged Ala-tRNA(Pro). The misacylated Cys-tRNA(Pro) is not edited by ProRS.</text>
</comment>
<comment type="catalytic activity">
    <reaction evidence="1">
        <text>tRNA(Pro) + L-proline + ATP = L-prolyl-tRNA(Pro) + AMP + diphosphate</text>
        <dbReference type="Rhea" id="RHEA:14305"/>
        <dbReference type="Rhea" id="RHEA-COMP:9700"/>
        <dbReference type="Rhea" id="RHEA-COMP:9702"/>
        <dbReference type="ChEBI" id="CHEBI:30616"/>
        <dbReference type="ChEBI" id="CHEBI:33019"/>
        <dbReference type="ChEBI" id="CHEBI:60039"/>
        <dbReference type="ChEBI" id="CHEBI:78442"/>
        <dbReference type="ChEBI" id="CHEBI:78532"/>
        <dbReference type="ChEBI" id="CHEBI:456215"/>
        <dbReference type="EC" id="6.1.1.15"/>
    </reaction>
</comment>
<comment type="subunit">
    <text evidence="1">Homodimer.</text>
</comment>
<comment type="subcellular location">
    <subcellularLocation>
        <location evidence="1">Cytoplasm</location>
    </subcellularLocation>
</comment>
<comment type="domain">
    <text evidence="1">Consists of three domains: the N-terminal catalytic domain, the editing domain and the C-terminal anticodon-binding domain.</text>
</comment>
<comment type="similarity">
    <text evidence="1">Belongs to the class-II aminoacyl-tRNA synthetase family. ProS type 1 subfamily.</text>
</comment>
<keyword id="KW-0030">Aminoacyl-tRNA synthetase</keyword>
<keyword id="KW-0067">ATP-binding</keyword>
<keyword id="KW-0963">Cytoplasm</keyword>
<keyword id="KW-0436">Ligase</keyword>
<keyword id="KW-0547">Nucleotide-binding</keyword>
<keyword id="KW-0648">Protein biosynthesis</keyword>
<keyword id="KW-1185">Reference proteome</keyword>